<comment type="function">
    <text>Hormone found in the sinus gland of isopods and decapods which controls the blood sugar level. Has a secretagogue action over the amylase released from the midgut gland. May act as a stress hormone and may be involved in the control of molting and reproduction.</text>
</comment>
<comment type="subcellular location">
    <subcellularLocation>
        <location>Secreted</location>
    </subcellularLocation>
</comment>
<comment type="tissue specificity">
    <text>Produced by the medulla terminalis X-organ in the eyestalks and transported to the sinus gland where they are stored and released.</text>
</comment>
<comment type="PTM">
    <text evidence="1">Stereoinversion of L-Phe (in CHH-I) to D-Phe (in CHH-II) the two forms are present in a ratio 3:1 (CHH-I/CHH-II).</text>
</comment>
<comment type="mass spectrometry"/>
<comment type="similarity">
    <text evidence="2">Belongs to the arthropod CHH/MIH/GIH/VIH hormone family.</text>
</comment>
<evidence type="ECO:0000269" key="1">
    <source>
    </source>
</evidence>
<evidence type="ECO:0000305" key="2"/>
<organism>
    <name type="scientific">Procambarus bouvieri</name>
    <name type="common">Mexican crayfish</name>
    <dbReference type="NCBI Taxonomy" id="6729"/>
    <lineage>
        <taxon>Eukaryota</taxon>
        <taxon>Metazoa</taxon>
        <taxon>Ecdysozoa</taxon>
        <taxon>Arthropoda</taxon>
        <taxon>Crustacea</taxon>
        <taxon>Multicrustacea</taxon>
        <taxon>Malacostraca</taxon>
        <taxon>Eumalacostraca</taxon>
        <taxon>Eucarida</taxon>
        <taxon>Decapoda</taxon>
        <taxon>Pleocyemata</taxon>
        <taxon>Astacidea</taxon>
        <taxon>Astacoidea</taxon>
        <taxon>Cambaridae</taxon>
        <taxon>Procambarus</taxon>
    </lineage>
</organism>
<name>CHH_PROBO</name>
<feature type="chain" id="PRO_0000209861" description="Crustacean hyperglycemic hormone">
    <location>
        <begin position="1"/>
        <end position="72"/>
    </location>
</feature>
<feature type="modified residue" description="Pyrrolidone carboxylic acid" evidence="1">
    <location>
        <position position="1"/>
    </location>
</feature>
<feature type="modified residue" description="D-phenylalanine; in form CHH-II" evidence="1">
    <location>
        <position position="3"/>
    </location>
</feature>
<feature type="modified residue" description="Valine amide" evidence="1">
    <location>
        <position position="72"/>
    </location>
</feature>
<feature type="disulfide bond" evidence="1">
    <location>
        <begin position="7"/>
        <end position="43"/>
    </location>
</feature>
<feature type="disulfide bond" evidence="1">
    <location>
        <begin position="23"/>
        <end position="39"/>
    </location>
</feature>
<feature type="disulfide bond" evidence="1">
    <location>
        <begin position="26"/>
        <end position="52"/>
    </location>
</feature>
<protein>
    <recommendedName>
        <fullName>Crustacean hyperglycemic hormone</fullName>
        <shortName>CHH</shortName>
    </recommendedName>
</protein>
<sequence>QVFDQACKGIYDRAIFKKLDRVCEDCYNLYRKPYVATTCRQNCYANSVFRQCLDDLLLIDVVDEYISGVQTV</sequence>
<dbReference type="SMR" id="P55845"/>
<dbReference type="GO" id="GO:0005576">
    <property type="term" value="C:extracellular region"/>
    <property type="evidence" value="ECO:0007669"/>
    <property type="project" value="UniProtKB-SubCell"/>
</dbReference>
<dbReference type="GO" id="GO:0005184">
    <property type="term" value="F:neuropeptide hormone activity"/>
    <property type="evidence" value="ECO:0007669"/>
    <property type="project" value="InterPro"/>
</dbReference>
<dbReference type="GO" id="GO:0007623">
    <property type="term" value="P:circadian rhythm"/>
    <property type="evidence" value="ECO:0007669"/>
    <property type="project" value="TreeGrafter"/>
</dbReference>
<dbReference type="GO" id="GO:0006006">
    <property type="term" value="P:glucose metabolic process"/>
    <property type="evidence" value="ECO:0007669"/>
    <property type="project" value="UniProtKB-KW"/>
</dbReference>
<dbReference type="GO" id="GO:0007218">
    <property type="term" value="P:neuropeptide signaling pathway"/>
    <property type="evidence" value="ECO:0007669"/>
    <property type="project" value="UniProtKB-KW"/>
</dbReference>
<dbReference type="Gene3D" id="1.10.2010.10">
    <property type="entry name" value="Crustacean CHH/MIH/GIH neurohormone"/>
    <property type="match status" value="1"/>
</dbReference>
<dbReference type="InterPro" id="IPR018251">
    <property type="entry name" value="Crust_neurhormone_CS"/>
</dbReference>
<dbReference type="InterPro" id="IPR031098">
    <property type="entry name" value="Crust_neurohorm"/>
</dbReference>
<dbReference type="InterPro" id="IPR035957">
    <property type="entry name" value="Crust_neurohorm_sf"/>
</dbReference>
<dbReference type="InterPro" id="IPR001166">
    <property type="entry name" value="Hyperglycemic"/>
</dbReference>
<dbReference type="InterPro" id="IPR000346">
    <property type="entry name" value="Hyperglycemic1"/>
</dbReference>
<dbReference type="PANTHER" id="PTHR35981">
    <property type="entry name" value="ION TRANSPORT PEPTIDE, ISOFORM C"/>
    <property type="match status" value="1"/>
</dbReference>
<dbReference type="PANTHER" id="PTHR35981:SF2">
    <property type="entry name" value="ION TRANSPORT PEPTIDE, ISOFORM C"/>
    <property type="match status" value="1"/>
</dbReference>
<dbReference type="Pfam" id="PF01147">
    <property type="entry name" value="Crust_neurohorm"/>
    <property type="match status" value="1"/>
</dbReference>
<dbReference type="PRINTS" id="PR00548">
    <property type="entry name" value="HYPRGLYCEMC1"/>
</dbReference>
<dbReference type="PRINTS" id="PR00550">
    <property type="entry name" value="HYPRGLYCEMIC"/>
</dbReference>
<dbReference type="SUPFAM" id="SSF81778">
    <property type="entry name" value="Crustacean CHH/MIH/GIH neurohormone"/>
    <property type="match status" value="1"/>
</dbReference>
<dbReference type="PROSITE" id="PS01250">
    <property type="entry name" value="CHH_MIH_GIH"/>
    <property type="match status" value="1"/>
</dbReference>
<keyword id="KW-0027">Amidation</keyword>
<keyword id="KW-0119">Carbohydrate metabolism</keyword>
<keyword id="KW-0208">D-amino acid</keyword>
<keyword id="KW-0903">Direct protein sequencing</keyword>
<keyword id="KW-1015">Disulfide bond</keyword>
<keyword id="KW-0313">Glucose metabolism</keyword>
<keyword id="KW-0372">Hormone</keyword>
<keyword id="KW-0527">Neuropeptide</keyword>
<keyword id="KW-0873">Pyrrolidone carboxylic acid</keyword>
<keyword id="KW-0964">Secreted</keyword>
<reference key="1">
    <citation type="journal article" date="1993" name="Peptides">
        <title>Primary structure of the major isomorph of the crustacean hyperglycemic hormone (CHH-I) from the sinus gland of the Mexican crayfish Procambarus bouvieri (Ortmann): interspecies comparison.</title>
        <authorList>
            <person name="Huberman A."/>
            <person name="Aguilar M.B."/>
            <person name="Brew K."/>
            <person name="Shabanowitz J."/>
            <person name="Hunt D.F."/>
        </authorList>
    </citation>
    <scope>PROTEIN SEQUENCE (CHH-I)</scope>
    <source>
        <tissue>Sinus gland</tissue>
    </source>
</reference>
<reference key="2">
    <citation type="journal article" date="1995" name="Peptides">
        <title>Amino acid sequence of the minor isomorph of the crustacean hyperglycemic hormone (CHH-II) of the Mexican crayfish Procambarus bouvieri (Ortmann): presence of a D-amino acid.</title>
        <authorList>
            <person name="Aguilar M.B."/>
            <person name="Soyez D."/>
            <person name="Falchetto R."/>
            <person name="Arnott D."/>
            <person name="Shabanowitz J."/>
            <person name="Hunt D.F."/>
            <person name="Huberman A."/>
        </authorList>
    </citation>
    <scope>PROTEIN SEQUENCE (CHH-II)</scope>
    <scope>MASS SPECTROMETRY</scope>
    <scope>PYROGLUTAMATE FORMATION AT GLN-1</scope>
    <scope>D-AMINO ACID AT PHE-3</scope>
    <scope>AMIDATION AT VAL-72</scope>
    <scope>DISULFIDE BONDS</scope>
    <source>
        <tissue>Sinus gland</tissue>
    </source>
</reference>
<proteinExistence type="evidence at protein level"/>
<accession>P55845</accession>